<protein>
    <recommendedName>
        <fullName evidence="1">ATP nucleosidase Cap17</fullName>
        <ecNumber evidence="1">3.5.99.-</ecNumber>
    </recommendedName>
    <alternativeName>
        <fullName evidence="3">MTA/SAH nucleoside phosphorylase</fullName>
    </alternativeName>
</protein>
<keyword id="KW-0051">Antiviral defense</keyword>
<keyword id="KW-0378">Hydrolase</keyword>
<proteinExistence type="evidence at protein level"/>
<reference evidence="5" key="1">
    <citation type="journal article" date="2020" name="Microbiol. Resour. Announc.">
        <title>Complete Genome Sequences of Seven Uropathogenic Escherichia coli Strains Isolated from Postmenopausal Women with Recurrent Urinary Tract Infection.</title>
        <authorList>
            <person name="Sharon B.M."/>
            <person name="Nguyen A."/>
            <person name="Arute A.P."/>
            <person name="Hulyalkar N.V."/>
            <person name="Nguyen V.H."/>
            <person name="Zimmern P.E."/>
            <person name="De Nisco N.J."/>
        </authorList>
    </citation>
    <scope>NUCLEOTIDE SEQUENCE [LARGE SCALE GENOMIC DNA]</scope>
    <source>
        <strain>EcPF14 UPEC</strain>
    </source>
</reference>
<reference key="2">
    <citation type="journal article" date="2022" name="Nucleic Acids Res.">
        <title>Control of bacterial immune signaling by a WYL domain transcription factor.</title>
        <authorList>
            <person name="Blankenchip C.L."/>
            <person name="Nguyen J.V."/>
            <person name="Lau R.K."/>
            <person name="Ye Q."/>
            <person name="Gu Y."/>
            <person name="Corbett K.D."/>
        </authorList>
    </citation>
    <scope>FUNCTION</scope>
    <scope>FUNCTION IN VIRAL DEFENSE</scope>
    <scope>MUTAGENESIS OF ASP-472</scope>
    <source>
        <strain>EcPF14 UPEC</strain>
    </source>
</reference>
<evidence type="ECO:0000250" key="1">
    <source>
        <dbReference type="UniProtKB" id="P0DX71"/>
    </source>
</evidence>
<evidence type="ECO:0000269" key="2">
    <source>
    </source>
</evidence>
<evidence type="ECO:0000303" key="3">
    <source>
    </source>
</evidence>
<evidence type="ECO:0000305" key="4"/>
<evidence type="ECO:0000312" key="5">
    <source>
        <dbReference type="EMBL" id="QKY44554.1"/>
    </source>
</evidence>
<sequence length="505" mass="54398">MTNTNNEYVLIAGSISKNTEKLYIDRAHSFVRALTKSILDANVGLVVYLAGEPVNENGALLTFDWTIVKEAVDLMENYTPAHQLKIVTSRSAMREKMSEENRMLIRKLQVARFADVSYLDDDLITGGNIGSEQVDAATAMIALGGGKGVSDRASKMRKANHPILPFDLELGGICDDGKGALGLHAHFYAEPLSMFPCTGEAVKNQLDTLSLQEPYYGLERLSEIAVELLKAEWAAQQLLHTPSVLILTALPVELAAAKKVFGIADDESPRLTSNGIHFWSTSIQRSDGPVTGIVASFASAGNVNASAITTMLLSEFKPQKVLMMGIAAGLREKMVLGEVIISERVIYYESAAALEGGKFAPRPEILCLHMPTKQNLNTYLATTSLSARLGERAQAIGLEMPVNSQAGDVAAGIIVSSATIASGELLIRDPALLERFRSLHDKACVAEMEAYGVFDACEKQGVPALIVRGISDFGDSTKDDAFHSIASVAAAIITADYLQHGWIRA</sequence>
<organism>
    <name type="scientific">Escherichia coli</name>
    <dbReference type="NCBI Taxonomy" id="562"/>
    <lineage>
        <taxon>Bacteria</taxon>
        <taxon>Pseudomonadati</taxon>
        <taxon>Pseudomonadota</taxon>
        <taxon>Gammaproteobacteria</taxon>
        <taxon>Enterobacterales</taxon>
        <taxon>Enterobacteriaceae</taxon>
        <taxon>Escherichia</taxon>
    </lineage>
</organism>
<accession>P0DX75</accession>
<name>CAP17_ECOLX</name>
<comment type="function">
    <text evidence="1 2 3">Effector protein with (d)ATP degrading activity of a CBASS antivirus system (By similarity). CBASS (cyclic oligonucleotide-based antiphage signaling system) provides immunity against bacteriophage (PubMed:35536256). The CD-NTase protein synthesizes cyclic nucleotides in response to infection; these serve as specific second messenger signals (PubMed:35536256). The signals activate a diverse range of effectors, leading to bacterial cell death and thus abortive phage infection (PubMed:35536256). A type III CBASS system (PubMed:35536256). Expression of this CBASS system (Cap17-CapW-CdnC-Cap7-Cap6-Cap18-Cap19) in a susceptible E.coli (strain JP313) confers resistance to bacteriophage lambda cI- (PubMed:35536256). The C-terminal purine nucleoside phosphorylase (PNP) domain cleaves the N-glycosidic bond of (d)ATP to release adenine and a sugar triphosphate. This protein may be activated by the cognate CD-NTase (CdnC) (By similarity).</text>
</comment>
<comment type="catalytic activity">
    <reaction evidence="1">
        <text>ATP + H2O = D-ribose 5-triphosphate + adenine</text>
        <dbReference type="Rhea" id="RHEA:44164"/>
        <dbReference type="ChEBI" id="CHEBI:15377"/>
        <dbReference type="ChEBI" id="CHEBI:16708"/>
        <dbReference type="ChEBI" id="CHEBI:30616"/>
        <dbReference type="ChEBI" id="CHEBI:91013"/>
    </reaction>
    <physiologicalReaction direction="left-to-right" evidence="1">
        <dbReference type="Rhea" id="RHEA:44165"/>
    </physiologicalReaction>
</comment>
<comment type="catalytic activity">
    <reaction evidence="1">
        <text>dATP + H2O = 2-deoxyribose 5-triphosphate + adenine</text>
        <dbReference type="Rhea" id="RHEA:77215"/>
        <dbReference type="ChEBI" id="CHEBI:15377"/>
        <dbReference type="ChEBI" id="CHEBI:16708"/>
        <dbReference type="ChEBI" id="CHEBI:61404"/>
        <dbReference type="ChEBI" id="CHEBI:72943"/>
    </reaction>
    <physiologicalReaction direction="left-to-right" evidence="1">
        <dbReference type="Rhea" id="RHEA:77216"/>
    </physiologicalReaction>
</comment>
<comment type="domain">
    <text evidence="1">Has 2 domains, an N-terminal domain probably involved in sensing cyclic nucleotides and C-terminal purine nucleoside phosphorylase (PNP) domain; the PNP domain has ATP nucleosidase activity.</text>
</comment>
<comment type="similarity">
    <text evidence="4">Belongs to the Cap17 family.</text>
</comment>
<gene>
    <name evidence="3" type="primary">cap17</name>
    <name evidence="5" type="ORF">HR072_00375</name>
</gene>
<dbReference type="EC" id="3.5.99.-" evidence="1"/>
<dbReference type="EMBL" id="CP054230">
    <property type="protein sequence ID" value="QKY44554.1"/>
    <property type="molecule type" value="Genomic_DNA"/>
</dbReference>
<dbReference type="RefSeq" id="WP_001534695.1">
    <property type="nucleotide sequence ID" value="NZ_WIKR01000024.1"/>
</dbReference>
<dbReference type="SMR" id="P0DX75"/>
<dbReference type="GO" id="GO:0005829">
    <property type="term" value="C:cytosol"/>
    <property type="evidence" value="ECO:0007669"/>
    <property type="project" value="TreeGrafter"/>
</dbReference>
<dbReference type="GO" id="GO:0008782">
    <property type="term" value="F:adenosylhomocysteine nucleosidase activity"/>
    <property type="evidence" value="ECO:0007669"/>
    <property type="project" value="TreeGrafter"/>
</dbReference>
<dbReference type="GO" id="GO:0008930">
    <property type="term" value="F:methylthioadenosine nucleosidase activity"/>
    <property type="evidence" value="ECO:0007669"/>
    <property type="project" value="TreeGrafter"/>
</dbReference>
<dbReference type="GO" id="GO:0051607">
    <property type="term" value="P:defense response to virus"/>
    <property type="evidence" value="ECO:0007669"/>
    <property type="project" value="UniProtKB-KW"/>
</dbReference>
<dbReference type="GO" id="GO:0019284">
    <property type="term" value="P:L-methionine salvage from S-adenosylmethionine"/>
    <property type="evidence" value="ECO:0007669"/>
    <property type="project" value="TreeGrafter"/>
</dbReference>
<dbReference type="GO" id="GO:0009116">
    <property type="term" value="P:nucleoside metabolic process"/>
    <property type="evidence" value="ECO:0007669"/>
    <property type="project" value="InterPro"/>
</dbReference>
<dbReference type="CDD" id="cd09008">
    <property type="entry name" value="MTAN"/>
    <property type="match status" value="1"/>
</dbReference>
<dbReference type="Gene3D" id="3.40.50.1580">
    <property type="entry name" value="Nucleoside phosphorylase domain"/>
    <property type="match status" value="1"/>
</dbReference>
<dbReference type="InterPro" id="IPR041327">
    <property type="entry name" value="Cap17-like_N"/>
</dbReference>
<dbReference type="InterPro" id="IPR000845">
    <property type="entry name" value="Nucleoside_phosphorylase_d"/>
</dbReference>
<dbReference type="InterPro" id="IPR035994">
    <property type="entry name" value="Nucleoside_phosphorylase_sf"/>
</dbReference>
<dbReference type="PANTHER" id="PTHR46832">
    <property type="entry name" value="5'-METHYLTHIOADENOSINE/S-ADENOSYLHOMOCYSTEINE NUCLEOSIDASE"/>
    <property type="match status" value="1"/>
</dbReference>
<dbReference type="PANTHER" id="PTHR46832:SF1">
    <property type="entry name" value="5'-METHYLTHIOADENOSINE_S-ADENOSYLHOMOCYSTEINE NUCLEOSIDASE"/>
    <property type="match status" value="1"/>
</dbReference>
<dbReference type="Pfam" id="PF18178">
    <property type="entry name" value="Cap17-like_N"/>
    <property type="match status" value="1"/>
</dbReference>
<dbReference type="Pfam" id="PF01048">
    <property type="entry name" value="PNP_UDP_1"/>
    <property type="match status" value="1"/>
</dbReference>
<dbReference type="SUPFAM" id="SSF53167">
    <property type="entry name" value="Purine and uridine phosphorylases"/>
    <property type="match status" value="1"/>
</dbReference>
<feature type="chain" id="PRO_0000459341" description="ATP nucleosidase Cap17">
    <location>
        <begin position="1"/>
        <end position="505"/>
    </location>
</feature>
<feature type="region of interest" description="Cyclic oligonucleotide sensing-domain" evidence="1">
    <location>
        <begin position="1"/>
        <end position="229"/>
    </location>
</feature>
<feature type="region of interest" description="Purine nucleoside phosphorylase domain" evidence="1">
    <location>
        <begin position="239"/>
        <end position="505"/>
    </location>
</feature>
<feature type="mutagenesis site" description="No longer confers resistance to bacteriophage lambda." evidence="2">
    <original>D</original>
    <variation>N</variation>
    <location>
        <position position="472"/>
    </location>
</feature>